<comment type="function">
    <text evidence="1">Cecropins have lytic and antibacterial activity against several Gram-positive and Gram-negative bacteria. Also has activity against fungi.</text>
</comment>
<comment type="subunit">
    <text evidence="1 2">Monomer.</text>
</comment>
<comment type="subcellular location">
    <subcellularLocation>
        <location evidence="1 2">Secreted</location>
    </subcellularLocation>
</comment>
<comment type="tissue specificity">
    <text evidence="1 2">Hemolymph.</text>
</comment>
<comment type="induction">
    <text evidence="1 2">By bacterial infection.</text>
</comment>
<comment type="mass spectrometry" mass="3847.87" method="MALDI" evidence="1"/>
<comment type="similarity">
    <text evidence="2">Belongs to the cecropin family.</text>
</comment>
<accession>P83414</accession>
<reference evidence="2" key="1">
    <citation type="submission" date="2002-07" db="UniProtKB">
        <authorList>
            <person name="Bulet P."/>
            <person name="Lamberty M."/>
            <person name="Brookhart G."/>
            <person name="Bushey D."/>
        </authorList>
    </citation>
    <scope>PROTEIN SEQUENCE</scope>
    <scope>FUNCTION</scope>
    <scope>SUBUNIT</scope>
    <scope>SUBCELLULAR LOCATION</scope>
    <scope>TISSUE SPECIFICITY</scope>
    <scope>INDUCTION</scope>
    <scope>MASS SPECTROMETRY</scope>
    <scope>HYDROXYLATION AT LYS-21</scope>
    <source>
        <tissue>Hemolymph</tissue>
    </source>
</reference>
<feature type="chain" id="PRO_0000127104" description="Cecropin-B">
    <location>
        <begin position="1"/>
        <end position="33" status="greater than"/>
    </location>
</feature>
<feature type="modified residue" description="5-hydroxylysine" evidence="1">
    <location>
        <position position="21"/>
    </location>
</feature>
<feature type="non-terminal residue" evidence="2">
    <location>
        <position position="33"/>
    </location>
</feature>
<sequence length="33" mass="3605">KWKVFKKIEKVGRNIRDGIVKAGPAIAVLGQAN</sequence>
<keyword id="KW-0044">Antibiotic</keyword>
<keyword id="KW-0929">Antimicrobial</keyword>
<keyword id="KW-0903">Direct protein sequencing</keyword>
<keyword id="KW-0295">Fungicide</keyword>
<keyword id="KW-0379">Hydroxylation</keyword>
<keyword id="KW-0391">Immunity</keyword>
<keyword id="KW-0399">Innate immunity</keyword>
<keyword id="KW-0964">Secreted</keyword>
<protein>
    <recommendedName>
        <fullName>Cecropin-B</fullName>
    </recommendedName>
</protein>
<name>CECB_HELVI</name>
<organism evidence="2">
    <name type="scientific">Heliothis virescens</name>
    <name type="common">Tobacco budworm moth</name>
    <dbReference type="NCBI Taxonomy" id="7102"/>
    <lineage>
        <taxon>Eukaryota</taxon>
        <taxon>Metazoa</taxon>
        <taxon>Ecdysozoa</taxon>
        <taxon>Arthropoda</taxon>
        <taxon>Hexapoda</taxon>
        <taxon>Insecta</taxon>
        <taxon>Pterygota</taxon>
        <taxon>Neoptera</taxon>
        <taxon>Endopterygota</taxon>
        <taxon>Lepidoptera</taxon>
        <taxon>Glossata</taxon>
        <taxon>Ditrysia</taxon>
        <taxon>Noctuoidea</taxon>
        <taxon>Noctuidae</taxon>
        <taxon>Heliothinae</taxon>
        <taxon>Heliothis</taxon>
    </lineage>
</organism>
<evidence type="ECO:0000269" key="1">
    <source ref="1"/>
</evidence>
<evidence type="ECO:0000305" key="2"/>
<proteinExistence type="evidence at protein level"/>
<dbReference type="SMR" id="P83414"/>
<dbReference type="GO" id="GO:0005576">
    <property type="term" value="C:extracellular region"/>
    <property type="evidence" value="ECO:0007669"/>
    <property type="project" value="UniProtKB-SubCell"/>
</dbReference>
<dbReference type="GO" id="GO:0019731">
    <property type="term" value="P:antibacterial humoral response"/>
    <property type="evidence" value="ECO:0007669"/>
    <property type="project" value="InterPro"/>
</dbReference>
<dbReference type="GO" id="GO:0050832">
    <property type="term" value="P:defense response to fungus"/>
    <property type="evidence" value="ECO:0007669"/>
    <property type="project" value="UniProtKB-KW"/>
</dbReference>
<dbReference type="GO" id="GO:0050830">
    <property type="term" value="P:defense response to Gram-positive bacterium"/>
    <property type="evidence" value="ECO:0007669"/>
    <property type="project" value="UniProtKB-ARBA"/>
</dbReference>
<dbReference type="GO" id="GO:0045087">
    <property type="term" value="P:innate immune response"/>
    <property type="evidence" value="ECO:0007669"/>
    <property type="project" value="UniProtKB-KW"/>
</dbReference>
<dbReference type="GO" id="GO:0031640">
    <property type="term" value="P:killing of cells of another organism"/>
    <property type="evidence" value="ECO:0007669"/>
    <property type="project" value="UniProtKB-KW"/>
</dbReference>
<dbReference type="InterPro" id="IPR000875">
    <property type="entry name" value="Cecropin"/>
</dbReference>
<dbReference type="Pfam" id="PF00272">
    <property type="entry name" value="Cecropin"/>
    <property type="match status" value="1"/>
</dbReference>
<dbReference type="PROSITE" id="PS00268">
    <property type="entry name" value="CECROPIN"/>
    <property type="match status" value="1"/>
</dbReference>